<organism>
    <name type="scientific">Caenorhabditis elegans</name>
    <dbReference type="NCBI Taxonomy" id="6239"/>
    <lineage>
        <taxon>Eukaryota</taxon>
        <taxon>Metazoa</taxon>
        <taxon>Ecdysozoa</taxon>
        <taxon>Nematoda</taxon>
        <taxon>Chromadorea</taxon>
        <taxon>Rhabditida</taxon>
        <taxon>Rhabditina</taxon>
        <taxon>Rhabditomorpha</taxon>
        <taxon>Rhabditoidea</taxon>
        <taxon>Rhabditidae</taxon>
        <taxon>Peloderinae</taxon>
        <taxon>Caenorhabditis</taxon>
    </lineage>
</organism>
<comment type="function">
    <text evidence="6 7">Precursor of the egg-yolk proteins that are sources of nutrients during embryonic development (Probable). Together with other vitellogenins, may play a role in modulating life-span, acting via induction of autophagy and lysosomal lipolysis (PubMed:26671266).</text>
</comment>
<comment type="subcellular location">
    <subcellularLocation>
        <location evidence="8">Secreted</location>
    </subcellularLocation>
</comment>
<comment type="tissue specificity">
    <text evidence="8">Expressed in the intestine of adult hermaphrodites.</text>
</comment>
<comment type="disruption phenotype">
    <text evidence="6">Simultaneous RNAi-mediated knockdown of vitellogenins vit-1, vit-2, vit-3, vit-4 and vit-5 increases life span, causes accumulation of neutral lipid and an increase in lgg-1 foci in the proximal intestine; however, does not affect fertility or pharyngeal pumping rates (PubMed:26671266). Expression of transcription factors pha-4 and daf-16 are increased (PubMed:26671266).</text>
</comment>
<comment type="caution">
    <text evidence="8">High sequence similarity with other vitellogenin genes means that assigning functions to individual proteins is difficult; authors sometimes refer to VITs or vitellogenins.</text>
</comment>
<accession>Q9N4J2</accession>
<proteinExistence type="evidence at protein level"/>
<reference key="1">
    <citation type="journal article" date="1998" name="Science">
        <title>Genome sequence of the nematode C. elegans: a platform for investigating biology.</title>
        <authorList>
            <consortium name="The C. elegans sequencing consortium"/>
        </authorList>
    </citation>
    <scope>NUCLEOTIDE SEQUENCE [LARGE SCALE GENOMIC DNA]</scope>
    <source>
        <strain>Bristol N2</strain>
    </source>
</reference>
<reference key="2">
    <citation type="journal article" date="2003" name="Nat. Biotechnol.">
        <title>Lectin affinity capture, isotope-coded tagging and mass spectrometry to identify N-linked glycoproteins.</title>
        <authorList>
            <person name="Kaji H."/>
            <person name="Saito H."/>
            <person name="Yamauchi Y."/>
            <person name="Shinkawa T."/>
            <person name="Taoka M."/>
            <person name="Hirabayashi J."/>
            <person name="Kasai K."/>
            <person name="Takahashi N."/>
            <person name="Isobe T."/>
        </authorList>
    </citation>
    <scope>GLYCOSYLATION [LARGE SCALE ANALYSIS] AT ASN-1266</scope>
    <scope>IDENTIFICATION BY MASS SPECTROMETRY</scope>
    <source>
        <strain>Bristol N2</strain>
    </source>
</reference>
<reference key="3">
    <citation type="journal article" date="2007" name="Mol. Cell. Proteomics">
        <title>Proteomics reveals N-linked glycoprotein diversity in Caenorhabditis elegans and suggests an atypical translocation mechanism for integral membrane proteins.</title>
        <authorList>
            <person name="Kaji H."/>
            <person name="Kamiie J."/>
            <person name="Kawakami H."/>
            <person name="Kido K."/>
            <person name="Yamauchi Y."/>
            <person name="Shinkawa T."/>
            <person name="Taoka M."/>
            <person name="Takahashi N."/>
            <person name="Isobe T."/>
        </authorList>
    </citation>
    <scope>GLYCOSYLATION [LARGE SCALE ANALYSIS] AT ASN-1266</scope>
    <scope>IDENTIFICATION BY MASS SPECTROMETRY</scope>
    <source>
        <strain>Bristol N2</strain>
    </source>
</reference>
<reference key="4">
    <citation type="journal article" date="2016" name="Autophagy">
        <title>Autophagy-mediated longevity is modulated by lipoprotein biogenesis.</title>
        <authorList>
            <person name="Seah N.E."/>
            <person name="de Magalhaes Filho C.D."/>
            <person name="Petrashen A.P."/>
            <person name="Henderson H.R."/>
            <person name="Laguer J."/>
            <person name="Gonzalez J."/>
            <person name="Dillin A."/>
            <person name="Hansen M."/>
            <person name="Lapierre L.R."/>
        </authorList>
    </citation>
    <scope>FUNCTION</scope>
    <scope>SUBCELLULAR LOCATION</scope>
    <scope>TISSUE SPECIFICITY</scope>
    <scope>DISRUPTION PHENOTYPE</scope>
</reference>
<dbReference type="EMBL" id="FO081486">
    <property type="protein sequence ID" value="CCD71957.1"/>
    <property type="molecule type" value="Genomic_DNA"/>
</dbReference>
<dbReference type="RefSeq" id="NP_001294839.1">
    <property type="nucleotide sequence ID" value="NM_001307910.1"/>
</dbReference>
<dbReference type="RefSeq" id="NP_001367903.1">
    <property type="nucleotide sequence ID" value="NM_001380933.1"/>
</dbReference>
<dbReference type="SMR" id="Q9N4J2"/>
<dbReference type="FunCoup" id="Q9N4J2">
    <property type="interactions" value="405"/>
</dbReference>
<dbReference type="STRING" id="6239.F59D8.1.1"/>
<dbReference type="GlyCosmos" id="Q9N4J2">
    <property type="glycosylation" value="1 site, No reported glycans"/>
</dbReference>
<dbReference type="iPTMnet" id="Q9N4J2"/>
<dbReference type="PaxDb" id="6239-F59D8.1"/>
<dbReference type="PeptideAtlas" id="Q9N4J2"/>
<dbReference type="EnsemblMetazoa" id="F59D8.1.1">
    <property type="protein sequence ID" value="F59D8.1.1"/>
    <property type="gene ID" value="WBGene00006927"/>
</dbReference>
<dbReference type="GeneID" id="24104675"/>
<dbReference type="UCSC" id="F59D8.1">
    <property type="organism name" value="c. elegans"/>
</dbReference>
<dbReference type="AGR" id="WB:WBGene00006927"/>
<dbReference type="WormBase" id="F59D8.1">
    <property type="protein sequence ID" value="CE20900"/>
    <property type="gene ID" value="WBGene00006927"/>
    <property type="gene designation" value="vit-3"/>
</dbReference>
<dbReference type="eggNOG" id="KOG4338">
    <property type="taxonomic scope" value="Eukaryota"/>
</dbReference>
<dbReference type="GeneTree" id="ENSGT00530000064273"/>
<dbReference type="HOGENOM" id="CLU_003821_0_0_1"/>
<dbReference type="InParanoid" id="Q9N4J2"/>
<dbReference type="OMA" id="ECWHAVM"/>
<dbReference type="OrthoDB" id="5825149at2759"/>
<dbReference type="PhylomeDB" id="Q9N4J2"/>
<dbReference type="PRO" id="PR:Q9N4J2"/>
<dbReference type="Proteomes" id="UP000001940">
    <property type="component" value="Chromosome X"/>
</dbReference>
<dbReference type="Bgee" id="WBGene00006927">
    <property type="expression patterns" value="Expressed in germ line (C elegans) and 2 other cell types or tissues"/>
</dbReference>
<dbReference type="GO" id="GO:0005576">
    <property type="term" value="C:extracellular region"/>
    <property type="evidence" value="ECO:0007669"/>
    <property type="project" value="UniProtKB-SubCell"/>
</dbReference>
<dbReference type="GO" id="GO:0005319">
    <property type="term" value="F:lipid transporter activity"/>
    <property type="evidence" value="ECO:0000318"/>
    <property type="project" value="GO_Central"/>
</dbReference>
<dbReference type="GO" id="GO:0045735">
    <property type="term" value="F:nutrient reservoir activity"/>
    <property type="evidence" value="ECO:0007669"/>
    <property type="project" value="UniProtKB-KW"/>
</dbReference>
<dbReference type="FunFam" id="1.25.10.20:FF:000003">
    <property type="entry name" value="Vitellogenin C"/>
    <property type="match status" value="1"/>
</dbReference>
<dbReference type="FunFam" id="2.30.230.10:FF:000004">
    <property type="entry name" value="Vitellogenin-1"/>
    <property type="match status" value="1"/>
</dbReference>
<dbReference type="FunFam" id="2.20.80.10:FF:000004">
    <property type="entry name" value="Vitellogenin-3"/>
    <property type="match status" value="1"/>
</dbReference>
<dbReference type="Gene3D" id="2.30.230.10">
    <property type="entry name" value="Lipovitellin, beta-sheet shell regions, chain A"/>
    <property type="match status" value="1"/>
</dbReference>
<dbReference type="Gene3D" id="2.20.80.10">
    <property type="entry name" value="Lipovitellin-phosvitin complex, chain A, domain 4"/>
    <property type="match status" value="1"/>
</dbReference>
<dbReference type="Gene3D" id="1.25.10.20">
    <property type="entry name" value="Vitellinogen, superhelical"/>
    <property type="match status" value="1"/>
</dbReference>
<dbReference type="InterPro" id="IPR015819">
    <property type="entry name" value="Lipid_transp_b-sht_shell"/>
</dbReference>
<dbReference type="InterPro" id="IPR011030">
    <property type="entry name" value="Lipovitellin_superhlx_dom"/>
</dbReference>
<dbReference type="InterPro" id="IPR015816">
    <property type="entry name" value="Vitellinogen_b-sht_N"/>
</dbReference>
<dbReference type="InterPro" id="IPR015255">
    <property type="entry name" value="Vitellinogen_open_b-sht"/>
</dbReference>
<dbReference type="InterPro" id="IPR050733">
    <property type="entry name" value="Vitellogenin/Apolipophorin"/>
</dbReference>
<dbReference type="InterPro" id="IPR001747">
    <property type="entry name" value="Vitellogenin_N"/>
</dbReference>
<dbReference type="InterPro" id="IPR001846">
    <property type="entry name" value="VWF_type-D"/>
</dbReference>
<dbReference type="PANTHER" id="PTHR23345:SF8">
    <property type="entry name" value="VITELLOGENIN-3-RELATED"/>
    <property type="match status" value="1"/>
</dbReference>
<dbReference type="PANTHER" id="PTHR23345">
    <property type="entry name" value="VITELLOGENIN-RELATED"/>
    <property type="match status" value="1"/>
</dbReference>
<dbReference type="Pfam" id="PF09172">
    <property type="entry name" value="Vit_open_b-sht"/>
    <property type="match status" value="1"/>
</dbReference>
<dbReference type="Pfam" id="PF01347">
    <property type="entry name" value="Vitellogenin_N"/>
    <property type="match status" value="1"/>
</dbReference>
<dbReference type="Pfam" id="PF00094">
    <property type="entry name" value="VWD"/>
    <property type="match status" value="1"/>
</dbReference>
<dbReference type="SMART" id="SM01169">
    <property type="entry name" value="DUF1943"/>
    <property type="match status" value="1"/>
</dbReference>
<dbReference type="SMART" id="SM00638">
    <property type="entry name" value="LPD_N"/>
    <property type="match status" value="1"/>
</dbReference>
<dbReference type="SMART" id="SM00216">
    <property type="entry name" value="VWD"/>
    <property type="match status" value="1"/>
</dbReference>
<dbReference type="SUPFAM" id="SSF56968">
    <property type="entry name" value="Lipovitellin-phosvitin complex, beta-sheet shell regions"/>
    <property type="match status" value="2"/>
</dbReference>
<dbReference type="SUPFAM" id="SSF48431">
    <property type="entry name" value="Lipovitellin-phosvitin complex, superhelical domain"/>
    <property type="match status" value="1"/>
</dbReference>
<dbReference type="PROSITE" id="PS51211">
    <property type="entry name" value="VITELLOGENIN"/>
    <property type="match status" value="1"/>
</dbReference>
<dbReference type="PROSITE" id="PS51233">
    <property type="entry name" value="VWFD"/>
    <property type="match status" value="1"/>
</dbReference>
<keyword id="KW-1015">Disulfide bond</keyword>
<keyword id="KW-0325">Glycoprotein</keyword>
<keyword id="KW-1185">Reference proteome</keyword>
<keyword id="KW-0964">Secreted</keyword>
<keyword id="KW-0732">Signal</keyword>
<keyword id="KW-0758">Storage protein</keyword>
<evidence type="ECO:0000255" key="1"/>
<evidence type="ECO:0000255" key="2">
    <source>
        <dbReference type="PROSITE-ProRule" id="PRU00557"/>
    </source>
</evidence>
<evidence type="ECO:0000255" key="3">
    <source>
        <dbReference type="PROSITE-ProRule" id="PRU00580"/>
    </source>
</evidence>
<evidence type="ECO:0000269" key="4">
    <source>
    </source>
</evidence>
<evidence type="ECO:0000269" key="5">
    <source>
    </source>
</evidence>
<evidence type="ECO:0000269" key="6">
    <source>
    </source>
</evidence>
<evidence type="ECO:0000305" key="7"/>
<evidence type="ECO:0000305" key="8">
    <source>
    </source>
</evidence>
<name>VIT3_CAEEL</name>
<protein>
    <recommendedName>
        <fullName>Vitellogenin-3</fullName>
    </recommendedName>
</protein>
<sequence length="1603" mass="186530">MKSIIIASLVALAIAASPALDRTFSPKSEYVYKFDGLLLSGLPTTFSDASQTLISCRTRLQAVDDRYIHLQLIDIQYSASHIPQSEQWPKIKSLEQRELSDELKELLELPFRAQIRNGLVSEIQFSSEDAEWSKNAKRSILNLFSLRKSAPVDEMSQDQKDMESDKDSLFFNVHEKTMEGDCEVAYTIVQEGEKTIYTKSVNFDKCITRPETAYGLRFGSECKECEKEGQFVKPQTVYTYTFKNEKLQESEVHSIYTLNVNGQEVVKSETRSKVTFVEESKINREIKKVSGPKEEIVYSMENEKLIEQFYQQGDQAEVNPFKAIEMEQKVEQLDEIFRQIQEHEQNTPETVHLIARAVRMFRMCTIEELKKVHTTIYTKAEKKVQLVIETTLAVAGTKNTIQHLIHHFEKKSITPLRAAELLKSVQETLYPSEHIADLLIQLAQSPLSEKYEPLRQSAWLAAGSVVRGFASKTQDLPLIRPASRQTKEKYVRVFMQHFRNADSTYEKVLALKTLGNAGIDLSVYELVQLIQDPRQPLSIRTEAVDALRLLKDVMPRKIQKVLLPVYKNRQNKPELRMAALWRMMHTIPEEPVLAHIVSQMENESNQHVAAFTYNVLRQFSKSTNPCYQQLAVRCSKVLLFTRYQPQEQMLSTYSQLPLFNSEWLSGVQFDFATIFEKNAFLPKEVQASFETVFGGNWNKYFAQVGFSQQNFEQVILKTLEKLSLYGKQSDELRSRRVQSGIQMLQEIVKKMNIRPRVQQTDSQNAHAVFYLRYKEMDYIVLPIDMETIDNVVEKYVRNGEFDIKSLLTFLTNDSKFELHRALFFYEAERRIPTTIGMPLTISGKMPTILSINGKVSIELEKLGARLVLDIVPTVATTHVTEMRFWYPVIEQGVKSLQSARLHTPLRFESTVELKKNTLEITHKFVVPENKKTTVSVHTRPVAFIRVPKNQDSEYVETEEKTISHSQYQMSTEEIDRQYETFGLRINAQGNVLSQWTLPMVLMTEQDFEFTLENKNRPVEFTARVTIGNLEKTDLSEIKFDKIFEKEFDLENNESENRRQYFHKMIREIQSEQGFKNLITLKLEAPQQMYWNTELRTVCDKWIRMCKVEMDARRSPMEHENKEWTLRTELLAARPQMPSSLRQLREQPHREVQLALNAKWGSSKKSEITFNAQLEQSTEQKKFLRNIEREYKGIPEYELLIKAARLNQVNVVSEYKLTPESEYTFSRIFDLIKAYNFWTVSEKRVQNEDRRVVLQLSVEPLSRQYMNMTIQTPEQEVELKNVRIPRVVLPTIARRAMFQQTWEKTGATCKVGQSEVSTFDNVIYRAPLTTCYSLVAKDCSEQPRFAVLAKKINKNSEELLVKVVRREEEIVVKKSDDKFLVKVDEKKVNPTELEQYNIEILGDNLIVIRLPHGEVRFDGYTVKTNMPSVASQNQLCGLCGNNDGERDNEFMTADNYETEDVEEFHRSYLLKNEECEVENDRISEKKNYRNKWNREEKKSDYVSSSDYENNYDEKETENQLFKKTLIKEFSNRVCFSIEPVSECRRGLESEKTSNEKIRFTCMPRHSKNARRFLKEAREQTVADLVDFPVSFVESVKIPTACVAY</sequence>
<feature type="signal peptide" evidence="1">
    <location>
        <begin position="1"/>
        <end position="15"/>
    </location>
</feature>
<feature type="chain" id="PRO_0000041534" description="Vitellogenin-3">
    <location>
        <begin position="16"/>
        <end position="1603"/>
    </location>
</feature>
<feature type="domain" description="Vitellogenin" evidence="2">
    <location>
        <begin position="24"/>
        <end position="685"/>
    </location>
</feature>
<feature type="domain" description="VWFD" evidence="3">
    <location>
        <begin position="1306"/>
        <end position="1475"/>
    </location>
</feature>
<feature type="glycosylation site" description="N-linked (GlcNAc...) asparagine" evidence="4 5">
    <location>
        <position position="1266"/>
    </location>
</feature>
<feature type="disulfide bond" evidence="3">
    <location>
        <begin position="1308"/>
        <end position="1438"/>
    </location>
</feature>
<feature type="disulfide bond" evidence="3">
    <location>
        <begin position="1330"/>
        <end position="1474"/>
    </location>
</feature>
<gene>
    <name type="primary">vit-3</name>
    <name type="ORF">F59D8.1</name>
</gene>